<keyword id="KW-0029">Amino-acid transport</keyword>
<keyword id="KW-0472">Membrane</keyword>
<keyword id="KW-1185">Reference proteome</keyword>
<keyword id="KW-0812">Transmembrane</keyword>
<keyword id="KW-1133">Transmembrane helix</keyword>
<keyword id="KW-0813">Transport</keyword>
<name>MUP3_YEAST</name>
<accession>P38734</accession>
<accession>D3DKT2</accession>
<protein>
    <recommendedName>
        <fullName>Low-affinity methionine permease</fullName>
    </recommendedName>
</protein>
<dbReference type="EMBL" id="U11583">
    <property type="protein sequence ID" value="AAB65048.1"/>
    <property type="molecule type" value="Genomic_DNA"/>
</dbReference>
<dbReference type="EMBL" id="BK006934">
    <property type="protein sequence ID" value="DAA06649.1"/>
    <property type="molecule type" value="Genomic_DNA"/>
</dbReference>
<dbReference type="PIR" id="S48932">
    <property type="entry name" value="S48932"/>
</dbReference>
<dbReference type="RefSeq" id="NP_011827.1">
    <property type="nucleotide sequence ID" value="NM_001179116.1"/>
</dbReference>
<dbReference type="SMR" id="P38734"/>
<dbReference type="BioGRID" id="36386">
    <property type="interactions" value="69"/>
</dbReference>
<dbReference type="DIP" id="DIP-5572N"/>
<dbReference type="FunCoup" id="P38734">
    <property type="interactions" value="421"/>
</dbReference>
<dbReference type="IntAct" id="P38734">
    <property type="interactions" value="13"/>
</dbReference>
<dbReference type="STRING" id="4932.YHL036W"/>
<dbReference type="TCDB" id="2.A.3.8.16">
    <property type="family name" value="the amino acid-polyamine-organocation (apc) family"/>
</dbReference>
<dbReference type="PaxDb" id="4932-YHL036W"/>
<dbReference type="EnsemblFungi" id="YHL036W_mRNA">
    <property type="protein sequence ID" value="YHL036W"/>
    <property type="gene ID" value="YHL036W"/>
</dbReference>
<dbReference type="GeneID" id="856349"/>
<dbReference type="KEGG" id="sce:YHL036W"/>
<dbReference type="AGR" id="SGD:S000001028"/>
<dbReference type="SGD" id="S000001028">
    <property type="gene designation" value="MUP3"/>
</dbReference>
<dbReference type="VEuPathDB" id="FungiDB:YHL036W"/>
<dbReference type="eggNOG" id="KOG1287">
    <property type="taxonomic scope" value="Eukaryota"/>
</dbReference>
<dbReference type="HOGENOM" id="CLU_013661_4_0_1"/>
<dbReference type="InParanoid" id="P38734"/>
<dbReference type="OMA" id="AIVFGKY"/>
<dbReference type="OrthoDB" id="5982228at2759"/>
<dbReference type="BioCyc" id="YEAST:G3O-31055-MONOMER"/>
<dbReference type="Reactome" id="R-SCE-352230">
    <property type="pathway name" value="Amino acid transport across the plasma membrane"/>
</dbReference>
<dbReference type="BioGRID-ORCS" id="856349">
    <property type="hits" value="6 hits in 10 CRISPR screens"/>
</dbReference>
<dbReference type="PRO" id="PR:P38734"/>
<dbReference type="Proteomes" id="UP000002311">
    <property type="component" value="Chromosome VIII"/>
</dbReference>
<dbReference type="RNAct" id="P38734">
    <property type="molecule type" value="protein"/>
</dbReference>
<dbReference type="GO" id="GO:0000324">
    <property type="term" value="C:fungal-type vacuole"/>
    <property type="evidence" value="ECO:0007005"/>
    <property type="project" value="SGD"/>
</dbReference>
<dbReference type="GO" id="GO:0016020">
    <property type="term" value="C:membrane"/>
    <property type="evidence" value="ECO:0007669"/>
    <property type="project" value="UniProtKB-SubCell"/>
</dbReference>
<dbReference type="GO" id="GO:0015179">
    <property type="term" value="F:L-amino acid transmembrane transporter activity"/>
    <property type="evidence" value="ECO:0000318"/>
    <property type="project" value="GO_Central"/>
</dbReference>
<dbReference type="GO" id="GO:0015191">
    <property type="term" value="F:L-methionine transmembrane transporter activity"/>
    <property type="evidence" value="ECO:0000315"/>
    <property type="project" value="SGD"/>
</dbReference>
<dbReference type="GO" id="GO:0003333">
    <property type="term" value="P:amino acid transmembrane transport"/>
    <property type="evidence" value="ECO:0000318"/>
    <property type="project" value="GO_Central"/>
</dbReference>
<dbReference type="GO" id="GO:1903692">
    <property type="term" value="P:methionine import across plasma membrane"/>
    <property type="evidence" value="ECO:0000315"/>
    <property type="project" value="SGD"/>
</dbReference>
<dbReference type="Gene3D" id="1.20.1740.10">
    <property type="entry name" value="Amino acid/polyamine transporter I"/>
    <property type="match status" value="1"/>
</dbReference>
<dbReference type="InterPro" id="IPR002293">
    <property type="entry name" value="AA/rel_permease1"/>
</dbReference>
<dbReference type="InterPro" id="IPR050598">
    <property type="entry name" value="AminoAcid_Transporter"/>
</dbReference>
<dbReference type="PANTHER" id="PTHR11785">
    <property type="entry name" value="AMINO ACID TRANSPORTER"/>
    <property type="match status" value="1"/>
</dbReference>
<dbReference type="PANTHER" id="PTHR11785:SF382">
    <property type="entry name" value="LOW-AFFINITY METHIONINE PERMEASE"/>
    <property type="match status" value="1"/>
</dbReference>
<dbReference type="Pfam" id="PF13520">
    <property type="entry name" value="AA_permease_2"/>
    <property type="match status" value="1"/>
</dbReference>
<dbReference type="PIRSF" id="PIRSF006060">
    <property type="entry name" value="AA_transporter"/>
    <property type="match status" value="1"/>
</dbReference>
<reference key="1">
    <citation type="journal article" date="1994" name="Science">
        <title>Complete nucleotide sequence of Saccharomyces cerevisiae chromosome VIII.</title>
        <authorList>
            <person name="Johnston M."/>
            <person name="Andrews S."/>
            <person name="Brinkman R."/>
            <person name="Cooper J."/>
            <person name="Ding H."/>
            <person name="Dover J."/>
            <person name="Du Z."/>
            <person name="Favello A."/>
            <person name="Fulton L."/>
            <person name="Gattung S."/>
            <person name="Geisel C."/>
            <person name="Kirsten J."/>
            <person name="Kucaba T."/>
            <person name="Hillier L.W."/>
            <person name="Jier M."/>
            <person name="Johnston L."/>
            <person name="Langston Y."/>
            <person name="Latreille P."/>
            <person name="Louis E.J."/>
            <person name="Macri C."/>
            <person name="Mardis E."/>
            <person name="Menezes S."/>
            <person name="Mouser L."/>
            <person name="Nhan M."/>
            <person name="Rifkin L."/>
            <person name="Riles L."/>
            <person name="St Peter H."/>
            <person name="Trevaskis E."/>
            <person name="Vaughan K."/>
            <person name="Vignati D."/>
            <person name="Wilcox L."/>
            <person name="Wohldman P."/>
            <person name="Waterston R."/>
            <person name="Wilson R."/>
            <person name="Vaudin M."/>
        </authorList>
    </citation>
    <scope>NUCLEOTIDE SEQUENCE [LARGE SCALE GENOMIC DNA]</scope>
    <source>
        <strain>ATCC 204508 / S288c</strain>
    </source>
</reference>
<reference key="2">
    <citation type="journal article" date="2014" name="G3 (Bethesda)">
        <title>The reference genome sequence of Saccharomyces cerevisiae: Then and now.</title>
        <authorList>
            <person name="Engel S.R."/>
            <person name="Dietrich F.S."/>
            <person name="Fisk D.G."/>
            <person name="Binkley G."/>
            <person name="Balakrishnan R."/>
            <person name="Costanzo M.C."/>
            <person name="Dwight S.S."/>
            <person name="Hitz B.C."/>
            <person name="Karra K."/>
            <person name="Nash R.S."/>
            <person name="Weng S."/>
            <person name="Wong E.D."/>
            <person name="Lloyd P."/>
            <person name="Skrzypek M.S."/>
            <person name="Miyasato S.R."/>
            <person name="Simison M."/>
            <person name="Cherry J.M."/>
        </authorList>
    </citation>
    <scope>GENOME REANNOTATION</scope>
    <source>
        <strain>ATCC 204508 / S288c</strain>
    </source>
</reference>
<reference key="3">
    <citation type="journal article" date="1996" name="J. Mol. Biol.">
        <title>The study of methionine uptake in Saccharomyces cerevisiae reveals a new family of amino acid permeases.</title>
        <authorList>
            <person name="Isnard A.D."/>
            <person name="Thomas D."/>
            <person name="Surdin-Kerjan Y."/>
        </authorList>
    </citation>
    <scope>CHARACTERIZATION</scope>
</reference>
<reference key="4">
    <citation type="journal article" date="2006" name="Proc. Natl. Acad. Sci. U.S.A.">
        <title>A global topology map of the Saccharomyces cerevisiae membrane proteome.</title>
        <authorList>
            <person name="Kim H."/>
            <person name="Melen K."/>
            <person name="Oesterberg M."/>
            <person name="von Heijne G."/>
        </authorList>
    </citation>
    <scope>TOPOLOGY [LARGE SCALE ANALYSIS]</scope>
    <source>
        <strain>ATCC 208353 / W303-1A</strain>
    </source>
</reference>
<sequence length="546" mass="60620">MEPLLFNSGKANPSQDVFIDVEVGDITTKYGSTNTGSFSSMDTVEAQAIKAETARFMEVPQGRHLGVFSTVVLFVSRIMGSGIFAVPSVILLNTGGNKLIYFAIWVFSAAIAFAGLYLFLEFGSWIPKSGGRKNFLERSFERPRLLISVVFSCYSVLTGYALTGSIVFGKYVLSAFGVTDDSWSKYVSISFIIFAVLIHGVSVRHGVFIQNALGGLKLIMIVLMCFAGLYTLFFYKSTGQVAWDLPVTQVEKDSLLSVSSIATAFISSFFCFSGWDTVHTVTSEIKNPVKTLKVSGPLSLIICFVCYTMMNVAYLKVLTYEEIVSAGPLVGSVLFTKLFGPRVGGKFIAFSIAISAASNILVVIYSISRVNQEIFKEGYLPFSIHMSKNWPFDAPLPSISLCGFITIAWILILPKEGESFNYLVSMDGYGNQFFLLLVAIGLFIWRFKHKNEVPEIRASTFGVLAIITLSLYMLMAPFFADPSLNRVGFLPPYQIMSLLVIVACFFFWLVKFVLLPKFFHYKLLPKITYLHDGLIVTEWVKKPCLC</sequence>
<comment type="function">
    <text>Very low affinity permease for methionine.</text>
</comment>
<comment type="subcellular location">
    <subcellularLocation>
        <location evidence="2">Membrane</location>
        <topology evidence="2">Multi-pass membrane protein</topology>
    </subcellularLocation>
</comment>
<comment type="similarity">
    <text evidence="2">To yeast high affinity methionine permease (MUP1).</text>
</comment>
<evidence type="ECO:0000255" key="1"/>
<evidence type="ECO:0000305" key="2"/>
<gene>
    <name type="primary">MUP3</name>
    <name type="ordered locus">YHL036W</name>
</gene>
<feature type="chain" id="PRO_0000096649" description="Low-affinity methionine permease">
    <location>
        <begin position="1"/>
        <end position="546"/>
    </location>
</feature>
<feature type="topological domain" description="Extracellular" evidence="1">
    <location>
        <begin position="1"/>
        <end position="70"/>
    </location>
</feature>
<feature type="transmembrane region" description="Helical" evidence="1">
    <location>
        <begin position="71"/>
        <end position="91"/>
    </location>
</feature>
<feature type="topological domain" description="Cytoplasmic" evidence="1">
    <location>
        <begin position="92"/>
        <end position="98"/>
    </location>
</feature>
<feature type="transmembrane region" description="Helical" evidence="1">
    <location>
        <begin position="99"/>
        <end position="119"/>
    </location>
</feature>
<feature type="topological domain" description="Extracellular" evidence="1">
    <location>
        <begin position="120"/>
        <end position="148"/>
    </location>
</feature>
<feature type="transmembrane region" description="Helical" evidence="1">
    <location>
        <begin position="149"/>
        <end position="169"/>
    </location>
</feature>
<feature type="topological domain" description="Cytoplasmic" evidence="1">
    <location>
        <begin position="170"/>
        <end position="188"/>
    </location>
</feature>
<feature type="transmembrane region" description="Helical" evidence="1">
    <location>
        <begin position="189"/>
        <end position="209"/>
    </location>
</feature>
<feature type="topological domain" description="Extracellular" evidence="1">
    <location>
        <begin position="210"/>
        <end position="213"/>
    </location>
</feature>
<feature type="transmembrane region" description="Helical" evidence="1">
    <location>
        <begin position="214"/>
        <end position="234"/>
    </location>
</feature>
<feature type="topological domain" description="Cytoplasmic" evidence="1">
    <location>
        <begin position="235"/>
        <end position="254"/>
    </location>
</feature>
<feature type="transmembrane region" description="Helical" evidence="1">
    <location>
        <begin position="255"/>
        <end position="275"/>
    </location>
</feature>
<feature type="topological domain" description="Extracellular" evidence="1">
    <location>
        <begin position="276"/>
        <end position="297"/>
    </location>
</feature>
<feature type="transmembrane region" description="Helical" evidence="1">
    <location>
        <begin position="298"/>
        <end position="318"/>
    </location>
</feature>
<feature type="topological domain" description="Cytoplasmic" evidence="1">
    <location>
        <position position="319"/>
    </location>
</feature>
<feature type="transmembrane region" description="Helical" evidence="1">
    <location>
        <begin position="320"/>
        <end position="340"/>
    </location>
</feature>
<feature type="topological domain" description="Extracellular" evidence="1">
    <location>
        <begin position="341"/>
        <end position="346"/>
    </location>
</feature>
<feature type="transmembrane region" description="Helical" evidence="1">
    <location>
        <begin position="347"/>
        <end position="367"/>
    </location>
</feature>
<feature type="topological domain" description="Cytoplasmic" evidence="1">
    <location>
        <begin position="368"/>
        <end position="393"/>
    </location>
</feature>
<feature type="transmembrane region" description="Helical" evidence="1">
    <location>
        <begin position="394"/>
        <end position="414"/>
    </location>
</feature>
<feature type="topological domain" description="Extracellular" evidence="1">
    <location>
        <begin position="415"/>
        <end position="423"/>
    </location>
</feature>
<feature type="transmembrane region" description="Helical" evidence="1">
    <location>
        <begin position="424"/>
        <end position="444"/>
    </location>
</feature>
<feature type="topological domain" description="Cytoplasmic" evidence="1">
    <location>
        <begin position="445"/>
        <end position="459"/>
    </location>
</feature>
<feature type="transmembrane region" description="Helical" evidence="1">
    <location>
        <begin position="460"/>
        <end position="480"/>
    </location>
</feature>
<feature type="topological domain" description="Extracellular" evidence="1">
    <location>
        <begin position="481"/>
        <end position="494"/>
    </location>
</feature>
<feature type="transmembrane region" description="Helical" evidence="1">
    <location>
        <begin position="495"/>
        <end position="515"/>
    </location>
</feature>
<feature type="topological domain" description="Cytoplasmic" evidence="1">
    <location>
        <begin position="516"/>
        <end position="546"/>
    </location>
</feature>
<organism>
    <name type="scientific">Saccharomyces cerevisiae (strain ATCC 204508 / S288c)</name>
    <name type="common">Baker's yeast</name>
    <dbReference type="NCBI Taxonomy" id="559292"/>
    <lineage>
        <taxon>Eukaryota</taxon>
        <taxon>Fungi</taxon>
        <taxon>Dikarya</taxon>
        <taxon>Ascomycota</taxon>
        <taxon>Saccharomycotina</taxon>
        <taxon>Saccharomycetes</taxon>
        <taxon>Saccharomycetales</taxon>
        <taxon>Saccharomycetaceae</taxon>
        <taxon>Saccharomyces</taxon>
    </lineage>
</organism>
<proteinExistence type="evidence at protein level"/>